<name>NNR_SALRD</name>
<protein>
    <recommendedName>
        <fullName>Bifunctional NAD(P)H-hydrate repair enzyme Nnr</fullName>
    </recommendedName>
    <alternativeName>
        <fullName>Nicotinamide nucleotide repair protein</fullName>
    </alternativeName>
    <domain>
        <recommendedName>
            <fullName>ADP-dependent (S)-NAD(P)H-hydrate dehydratase</fullName>
            <ecNumber>4.2.1.136</ecNumber>
        </recommendedName>
        <alternativeName>
            <fullName>ADP-dependent NAD(P)HX dehydratase</fullName>
        </alternativeName>
    </domain>
    <domain>
        <recommendedName>
            <fullName>NAD(P)H-hydrate epimerase</fullName>
            <ecNumber>5.1.99.6</ecNumber>
        </recommendedName>
        <alternativeName>
            <fullName>NAD(P)HX epimerase</fullName>
        </alternativeName>
    </domain>
</protein>
<evidence type="ECO:0000250" key="1"/>
<evidence type="ECO:0000305" key="2"/>
<comment type="function">
    <text evidence="1">Bifunctional enzyme that catalyzes the epimerization of the S- and R-forms of NAD(P)HX and the dehydration of the S-form of NAD(P)HX at the expense of ADP, which is converted to AMP. This allows the repair of both epimers of NAD(P)HX, a damaged form of NAD(P)H that is a result of enzymatic or heat-dependent hydration (By similarity).</text>
</comment>
<comment type="catalytic activity">
    <reaction>
        <text>(6S)-NADHX + ADP = AMP + phosphate + NADH + H(+)</text>
        <dbReference type="Rhea" id="RHEA:32223"/>
        <dbReference type="ChEBI" id="CHEBI:15378"/>
        <dbReference type="ChEBI" id="CHEBI:43474"/>
        <dbReference type="ChEBI" id="CHEBI:57945"/>
        <dbReference type="ChEBI" id="CHEBI:64074"/>
        <dbReference type="ChEBI" id="CHEBI:456215"/>
        <dbReference type="ChEBI" id="CHEBI:456216"/>
        <dbReference type="EC" id="4.2.1.136"/>
    </reaction>
</comment>
<comment type="catalytic activity">
    <reaction>
        <text>(6S)-NADPHX + ADP = AMP + phosphate + NADPH + H(+)</text>
        <dbReference type="Rhea" id="RHEA:32235"/>
        <dbReference type="ChEBI" id="CHEBI:15378"/>
        <dbReference type="ChEBI" id="CHEBI:43474"/>
        <dbReference type="ChEBI" id="CHEBI:57783"/>
        <dbReference type="ChEBI" id="CHEBI:64076"/>
        <dbReference type="ChEBI" id="CHEBI:456215"/>
        <dbReference type="ChEBI" id="CHEBI:456216"/>
        <dbReference type="EC" id="4.2.1.136"/>
    </reaction>
</comment>
<comment type="catalytic activity">
    <reaction>
        <text>(6R)-NADHX = (6S)-NADHX</text>
        <dbReference type="Rhea" id="RHEA:32215"/>
        <dbReference type="ChEBI" id="CHEBI:64074"/>
        <dbReference type="ChEBI" id="CHEBI:64075"/>
        <dbReference type="EC" id="5.1.99.6"/>
    </reaction>
</comment>
<comment type="catalytic activity">
    <reaction>
        <text>(6R)-NADPHX = (6S)-NADPHX</text>
        <dbReference type="Rhea" id="RHEA:32227"/>
        <dbReference type="ChEBI" id="CHEBI:64076"/>
        <dbReference type="ChEBI" id="CHEBI:64077"/>
        <dbReference type="EC" id="5.1.99.6"/>
    </reaction>
</comment>
<comment type="cofactor">
    <cofactor evidence="1">
        <name>K(+)</name>
        <dbReference type="ChEBI" id="CHEBI:29103"/>
    </cofactor>
    <text evidence="1">Binds 1 potassium ion per subunit.</text>
</comment>
<comment type="similarity">
    <text evidence="2">In the N-terminal section; belongs to the NnrE/AIBP family.</text>
</comment>
<comment type="similarity">
    <text evidence="2">In the C-terminal section; belongs to the NnrD/CARKD family.</text>
</comment>
<dbReference type="EC" id="4.2.1.136"/>
<dbReference type="EC" id="5.1.99.6"/>
<dbReference type="EMBL" id="CP000159">
    <property type="protein sequence ID" value="ABC45910.1"/>
    <property type="molecule type" value="Genomic_DNA"/>
</dbReference>
<dbReference type="RefSeq" id="WP_011403284.1">
    <property type="nucleotide sequence ID" value="NC_007677.1"/>
</dbReference>
<dbReference type="RefSeq" id="YP_444651.1">
    <property type="nucleotide sequence ID" value="NC_007677.1"/>
</dbReference>
<dbReference type="SMR" id="Q2S580"/>
<dbReference type="STRING" id="309807.SRU_0508"/>
<dbReference type="EnsemblBacteria" id="ABC45910">
    <property type="protein sequence ID" value="ABC45910"/>
    <property type="gene ID" value="SRU_0508"/>
</dbReference>
<dbReference type="KEGG" id="sru:SRU_0508"/>
<dbReference type="PATRIC" id="fig|309807.25.peg.529"/>
<dbReference type="eggNOG" id="COG0062">
    <property type="taxonomic scope" value="Bacteria"/>
</dbReference>
<dbReference type="eggNOG" id="COG0063">
    <property type="taxonomic scope" value="Bacteria"/>
</dbReference>
<dbReference type="HOGENOM" id="CLU_024853_4_1_10"/>
<dbReference type="OrthoDB" id="9806925at2"/>
<dbReference type="Proteomes" id="UP000008674">
    <property type="component" value="Chromosome"/>
</dbReference>
<dbReference type="GO" id="GO:0052855">
    <property type="term" value="F:ADP-dependent NAD(P)H-hydrate dehydratase activity"/>
    <property type="evidence" value="ECO:0007669"/>
    <property type="project" value="UniProtKB-UniRule"/>
</dbReference>
<dbReference type="GO" id="GO:0005524">
    <property type="term" value="F:ATP binding"/>
    <property type="evidence" value="ECO:0007669"/>
    <property type="project" value="UniProtKB-KW"/>
</dbReference>
<dbReference type="GO" id="GO:0046872">
    <property type="term" value="F:metal ion binding"/>
    <property type="evidence" value="ECO:0007669"/>
    <property type="project" value="UniProtKB-KW"/>
</dbReference>
<dbReference type="GO" id="GO:0052856">
    <property type="term" value="F:NAD(P)HX epimerase activity"/>
    <property type="evidence" value="ECO:0007669"/>
    <property type="project" value="UniProtKB-UniRule"/>
</dbReference>
<dbReference type="GO" id="GO:0110051">
    <property type="term" value="P:metabolite repair"/>
    <property type="evidence" value="ECO:0007669"/>
    <property type="project" value="TreeGrafter"/>
</dbReference>
<dbReference type="GO" id="GO:0046496">
    <property type="term" value="P:nicotinamide nucleotide metabolic process"/>
    <property type="evidence" value="ECO:0007669"/>
    <property type="project" value="UniProtKB-UniRule"/>
</dbReference>
<dbReference type="CDD" id="cd01171">
    <property type="entry name" value="YXKO-related"/>
    <property type="match status" value="1"/>
</dbReference>
<dbReference type="Gene3D" id="3.40.1190.20">
    <property type="match status" value="1"/>
</dbReference>
<dbReference type="Gene3D" id="3.40.50.10260">
    <property type="entry name" value="YjeF N-terminal domain"/>
    <property type="match status" value="1"/>
</dbReference>
<dbReference type="HAMAP" id="MF_01965">
    <property type="entry name" value="NADHX_dehydratase"/>
    <property type="match status" value="1"/>
</dbReference>
<dbReference type="HAMAP" id="MF_01966">
    <property type="entry name" value="NADHX_epimerase"/>
    <property type="match status" value="1"/>
</dbReference>
<dbReference type="InterPro" id="IPR000631">
    <property type="entry name" value="CARKD"/>
</dbReference>
<dbReference type="InterPro" id="IPR030677">
    <property type="entry name" value="Nnr"/>
</dbReference>
<dbReference type="InterPro" id="IPR029056">
    <property type="entry name" value="Ribokinase-like"/>
</dbReference>
<dbReference type="InterPro" id="IPR004443">
    <property type="entry name" value="YjeF_N_dom"/>
</dbReference>
<dbReference type="InterPro" id="IPR036652">
    <property type="entry name" value="YjeF_N_dom_sf"/>
</dbReference>
<dbReference type="NCBIfam" id="TIGR00196">
    <property type="entry name" value="yjeF_cterm"/>
    <property type="match status" value="1"/>
</dbReference>
<dbReference type="NCBIfam" id="TIGR00197">
    <property type="entry name" value="yjeF_nterm"/>
    <property type="match status" value="1"/>
</dbReference>
<dbReference type="PANTHER" id="PTHR12592:SF0">
    <property type="entry name" value="ATP-DEPENDENT (S)-NAD(P)H-HYDRATE DEHYDRATASE"/>
    <property type="match status" value="1"/>
</dbReference>
<dbReference type="PANTHER" id="PTHR12592">
    <property type="entry name" value="ATP-DEPENDENT (S)-NAD(P)H-HYDRATE DEHYDRATASE FAMILY MEMBER"/>
    <property type="match status" value="1"/>
</dbReference>
<dbReference type="Pfam" id="PF01256">
    <property type="entry name" value="Carb_kinase"/>
    <property type="match status" value="1"/>
</dbReference>
<dbReference type="Pfam" id="PF03853">
    <property type="entry name" value="YjeF_N"/>
    <property type="match status" value="1"/>
</dbReference>
<dbReference type="PIRSF" id="PIRSF017184">
    <property type="entry name" value="Nnr"/>
    <property type="match status" value="1"/>
</dbReference>
<dbReference type="SUPFAM" id="SSF53613">
    <property type="entry name" value="Ribokinase-like"/>
    <property type="match status" value="1"/>
</dbReference>
<dbReference type="SUPFAM" id="SSF64153">
    <property type="entry name" value="YjeF N-terminal domain-like"/>
    <property type="match status" value="1"/>
</dbReference>
<dbReference type="PROSITE" id="PS51383">
    <property type="entry name" value="YJEF_C_3"/>
    <property type="match status" value="1"/>
</dbReference>
<dbReference type="PROSITE" id="PS51385">
    <property type="entry name" value="YJEF_N"/>
    <property type="match status" value="1"/>
</dbReference>
<keyword id="KW-0067">ATP-binding</keyword>
<keyword id="KW-0413">Isomerase</keyword>
<keyword id="KW-0456">Lyase</keyword>
<keyword id="KW-0479">Metal-binding</keyword>
<keyword id="KW-0511">Multifunctional enzyme</keyword>
<keyword id="KW-0520">NAD</keyword>
<keyword id="KW-0521">NADP</keyword>
<keyword id="KW-0547">Nucleotide-binding</keyword>
<keyword id="KW-0630">Potassium</keyword>
<keyword id="KW-1185">Reference proteome</keyword>
<gene>
    <name type="primary">nnr</name>
    <name type="ordered locus">SRU_0508</name>
</gene>
<feature type="chain" id="PRO_0000416420" description="Bifunctional NAD(P)H-hydrate repair enzyme Nnr">
    <location>
        <begin position="1"/>
        <end position="542"/>
    </location>
</feature>
<feature type="domain" description="YjeF N-terminal">
    <location>
        <begin position="19"/>
        <end position="238"/>
    </location>
</feature>
<feature type="domain" description="YjeF C-terminal">
    <location>
        <begin position="251"/>
        <end position="534"/>
    </location>
</feature>
<feature type="region of interest" description="NAD(P)H-hydrate epimerase" evidence="1">
    <location>
        <begin position="1"/>
        <end position="243"/>
    </location>
</feature>
<feature type="region of interest" description="NADPHX 1; for epimerase activity" evidence="1">
    <location>
        <begin position="69"/>
        <end position="73"/>
    </location>
</feature>
<feature type="region of interest" description="NADPHX 1; for epimerase activity" evidence="1">
    <location>
        <begin position="152"/>
        <end position="158"/>
    </location>
</feature>
<feature type="region of interest" description="ADP-dependent (S)-NAD(P)H-hydrate dehydratase" evidence="1">
    <location>
        <begin position="251"/>
        <end position="542"/>
    </location>
</feature>
<feature type="region of interest" description="NADPHX 2; for dehydratase activity" evidence="1">
    <location>
        <begin position="410"/>
        <end position="416"/>
    </location>
</feature>
<feature type="binding site" evidence="1">
    <location>
        <position position="70"/>
    </location>
    <ligand>
        <name>K(+)</name>
        <dbReference type="ChEBI" id="CHEBI:29103"/>
    </ligand>
</feature>
<feature type="binding site" evidence="1">
    <location>
        <position position="148"/>
    </location>
    <ligand>
        <name>K(+)</name>
        <dbReference type="ChEBI" id="CHEBI:29103"/>
    </ligand>
</feature>
<feature type="binding site" evidence="1">
    <location>
        <position position="181"/>
    </location>
    <ligand>
        <name>(6S)-NADPHX</name>
        <dbReference type="ChEBI" id="CHEBI:64076"/>
        <label>1</label>
        <note>for epimerase activity</note>
    </ligand>
</feature>
<feature type="binding site" evidence="1">
    <location>
        <position position="184"/>
    </location>
    <ligand>
        <name>K(+)</name>
        <dbReference type="ChEBI" id="CHEBI:29103"/>
    </ligand>
</feature>
<feature type="binding site" evidence="1">
    <location>
        <position position="358"/>
    </location>
    <ligand>
        <name>(6S)-NADPHX</name>
        <dbReference type="ChEBI" id="CHEBI:64076"/>
        <label>2</label>
        <note>for dehydratase activity</note>
    </ligand>
</feature>
<feature type="binding site" evidence="1">
    <location>
        <begin position="445"/>
        <end position="449"/>
    </location>
    <ligand>
        <name>ADP</name>
        <dbReference type="ChEBI" id="CHEBI:456216"/>
    </ligand>
</feature>
<feature type="binding site" evidence="1">
    <location>
        <begin position="465"/>
        <end position="474"/>
    </location>
    <ligand>
        <name>ADP</name>
        <dbReference type="ChEBI" id="CHEBI:456216"/>
    </ligand>
</feature>
<feature type="binding site" evidence="1">
    <location>
        <position position="475"/>
    </location>
    <ligand>
        <name>(6S)-NADPHX</name>
        <dbReference type="ChEBI" id="CHEBI:64076"/>
        <label>2</label>
        <note>for dehydratase activity</note>
    </ligand>
</feature>
<sequence>MASSDAEALCPPVLTAGAMQAADRYTIEEYGLPSFTLMETAGRGCAARIQDAYGPLEDEAVVVLCGKGNNGGDGLVVARHLVTDGARVHVVLASAPDELSDDAAHNLSLLRQLQADGAVGERLTIGELEDVETLTAAVAPLRPRLYVDALLGTGLTSDVREPIRSLVTWVNGRTAPTVALDVPTGLHSDTGAVLGVAVRADRTATMAAPKVGLRVGEGPTRAGTVEVVDIGMPPFVLDRAAEKPGCVRETTDAAVRAWWPARDPDAYKYSVGTALIVGGAPPFAGAPVMAAKAAGRSGAGYVRCAGPETIHATLAGALTTIPTLPLPTGDDDGIAPDAALDALAEAADTADAILVGPGLGRAPGTAQFVRRLVRTVDTPLVLDADGLNALAGHIDELADQRQAPWVLTPHAGEFRRLAGEEGALTDRVRAAQTYAERWDAVCLLKGMPSVVAGPTGRTVLGSIATPALATAGTGDVLAGQCVGLMAQGLSPLNAAAAALHVGGAAAERYGATHDPRSMVATDLLDMIPRVAAERFGEGRRQR</sequence>
<proteinExistence type="inferred from homology"/>
<accession>Q2S580</accession>
<reference key="1">
    <citation type="journal article" date="2005" name="Proc. Natl. Acad. Sci. U.S.A.">
        <title>The genome of Salinibacter ruber: convergence and gene exchange among hyperhalophilic bacteria and archaea.</title>
        <authorList>
            <person name="Mongodin E.F."/>
            <person name="Nelson K.E."/>
            <person name="Daugherty S."/>
            <person name="DeBoy R.T."/>
            <person name="Wister J."/>
            <person name="Khouri H."/>
            <person name="Weidman J."/>
            <person name="Walsh D.A."/>
            <person name="Papke R.T."/>
            <person name="Sanchez Perez G."/>
            <person name="Sharma A.K."/>
            <person name="Nesbo C.L."/>
            <person name="MacLeod D."/>
            <person name="Bapteste E."/>
            <person name="Doolittle W.F."/>
            <person name="Charlebois R.L."/>
            <person name="Legault B."/>
            <person name="Rodriguez-Valera F."/>
        </authorList>
    </citation>
    <scope>NUCLEOTIDE SEQUENCE [LARGE SCALE GENOMIC DNA]</scope>
    <source>
        <strain>DSM 13855 / CECT 5946 / M31</strain>
    </source>
</reference>
<organism>
    <name type="scientific">Salinibacter ruber (strain DSM 13855 / M31)</name>
    <dbReference type="NCBI Taxonomy" id="309807"/>
    <lineage>
        <taxon>Bacteria</taxon>
        <taxon>Pseudomonadati</taxon>
        <taxon>Rhodothermota</taxon>
        <taxon>Rhodothermia</taxon>
        <taxon>Rhodothermales</taxon>
        <taxon>Salinibacteraceae</taxon>
        <taxon>Salinibacter</taxon>
    </lineage>
</organism>